<comment type="function">
    <text evidence="1">Binds directly to 23S rRNA. The L1 stalk is quite mobile in the ribosome, and is involved in E site tRNA release.</text>
</comment>
<comment type="function">
    <text evidence="1">Protein L1 is also a translational repressor protein, it controls the translation of the L11 operon by binding to its mRNA.</text>
</comment>
<comment type="subunit">
    <text evidence="1">Part of the 50S ribosomal subunit.</text>
</comment>
<comment type="similarity">
    <text evidence="1">Belongs to the universal ribosomal protein uL1 family.</text>
</comment>
<protein>
    <recommendedName>
        <fullName evidence="1">Large ribosomal subunit protein uL1</fullName>
    </recommendedName>
    <alternativeName>
        <fullName evidence="2">50S ribosomal protein L1</fullName>
    </alternativeName>
</protein>
<name>RL1_MARMM</name>
<gene>
    <name evidence="1" type="primary">rplA</name>
    <name type="ordered locus">Mmar10_1805</name>
</gene>
<proteinExistence type="inferred from homology"/>
<keyword id="KW-1185">Reference proteome</keyword>
<keyword id="KW-0678">Repressor</keyword>
<keyword id="KW-0687">Ribonucleoprotein</keyword>
<keyword id="KW-0689">Ribosomal protein</keyword>
<keyword id="KW-0694">RNA-binding</keyword>
<keyword id="KW-0699">rRNA-binding</keyword>
<keyword id="KW-0810">Translation regulation</keyword>
<keyword id="KW-0820">tRNA-binding</keyword>
<reference key="1">
    <citation type="submission" date="2006-08" db="EMBL/GenBank/DDBJ databases">
        <title>Complete sequence of Maricaulis maris MCS10.</title>
        <authorList>
            <consortium name="US DOE Joint Genome Institute"/>
            <person name="Copeland A."/>
            <person name="Lucas S."/>
            <person name="Lapidus A."/>
            <person name="Barry K."/>
            <person name="Detter J.C."/>
            <person name="Glavina del Rio T."/>
            <person name="Hammon N."/>
            <person name="Israni S."/>
            <person name="Dalin E."/>
            <person name="Tice H."/>
            <person name="Pitluck S."/>
            <person name="Saunders E."/>
            <person name="Brettin T."/>
            <person name="Bruce D."/>
            <person name="Han C."/>
            <person name="Tapia R."/>
            <person name="Gilna P."/>
            <person name="Schmutz J."/>
            <person name="Larimer F."/>
            <person name="Land M."/>
            <person name="Hauser L."/>
            <person name="Kyrpides N."/>
            <person name="Mikhailova N."/>
            <person name="Viollier P."/>
            <person name="Stephens C."/>
            <person name="Richardson P."/>
        </authorList>
    </citation>
    <scope>NUCLEOTIDE SEQUENCE [LARGE SCALE GENOMIC DNA]</scope>
    <source>
        <strain>MCS10</strain>
    </source>
</reference>
<feature type="chain" id="PRO_0000308043" description="Large ribosomal subunit protein uL1">
    <location>
        <begin position="1"/>
        <end position="232"/>
    </location>
</feature>
<organism>
    <name type="scientific">Maricaulis maris (strain MCS10)</name>
    <name type="common">Caulobacter maris</name>
    <dbReference type="NCBI Taxonomy" id="394221"/>
    <lineage>
        <taxon>Bacteria</taxon>
        <taxon>Pseudomonadati</taxon>
        <taxon>Pseudomonadota</taxon>
        <taxon>Alphaproteobacteria</taxon>
        <taxon>Maricaulales</taxon>
        <taxon>Maricaulaceae</taxon>
        <taxon>Maricaulis</taxon>
    </lineage>
</organism>
<dbReference type="EMBL" id="CP000449">
    <property type="protein sequence ID" value="ABI66097.1"/>
    <property type="molecule type" value="Genomic_DNA"/>
</dbReference>
<dbReference type="RefSeq" id="WP_011643743.1">
    <property type="nucleotide sequence ID" value="NC_008347.1"/>
</dbReference>
<dbReference type="SMR" id="Q0ANP0"/>
<dbReference type="STRING" id="394221.Mmar10_1805"/>
<dbReference type="KEGG" id="mmr:Mmar10_1805"/>
<dbReference type="eggNOG" id="COG0081">
    <property type="taxonomic scope" value="Bacteria"/>
</dbReference>
<dbReference type="HOGENOM" id="CLU_062853_0_0_5"/>
<dbReference type="OrthoDB" id="9803740at2"/>
<dbReference type="Proteomes" id="UP000001964">
    <property type="component" value="Chromosome"/>
</dbReference>
<dbReference type="GO" id="GO:0022625">
    <property type="term" value="C:cytosolic large ribosomal subunit"/>
    <property type="evidence" value="ECO:0007669"/>
    <property type="project" value="TreeGrafter"/>
</dbReference>
<dbReference type="GO" id="GO:0019843">
    <property type="term" value="F:rRNA binding"/>
    <property type="evidence" value="ECO:0007669"/>
    <property type="project" value="UniProtKB-UniRule"/>
</dbReference>
<dbReference type="GO" id="GO:0003735">
    <property type="term" value="F:structural constituent of ribosome"/>
    <property type="evidence" value="ECO:0007669"/>
    <property type="project" value="InterPro"/>
</dbReference>
<dbReference type="GO" id="GO:0000049">
    <property type="term" value="F:tRNA binding"/>
    <property type="evidence" value="ECO:0007669"/>
    <property type="project" value="UniProtKB-KW"/>
</dbReference>
<dbReference type="GO" id="GO:0006417">
    <property type="term" value="P:regulation of translation"/>
    <property type="evidence" value="ECO:0007669"/>
    <property type="project" value="UniProtKB-KW"/>
</dbReference>
<dbReference type="GO" id="GO:0006412">
    <property type="term" value="P:translation"/>
    <property type="evidence" value="ECO:0007669"/>
    <property type="project" value="UniProtKB-UniRule"/>
</dbReference>
<dbReference type="CDD" id="cd00403">
    <property type="entry name" value="Ribosomal_L1"/>
    <property type="match status" value="1"/>
</dbReference>
<dbReference type="FunFam" id="3.40.50.790:FF:000001">
    <property type="entry name" value="50S ribosomal protein L1"/>
    <property type="match status" value="1"/>
</dbReference>
<dbReference type="Gene3D" id="3.30.190.20">
    <property type="match status" value="1"/>
</dbReference>
<dbReference type="Gene3D" id="3.40.50.790">
    <property type="match status" value="1"/>
</dbReference>
<dbReference type="HAMAP" id="MF_01318_B">
    <property type="entry name" value="Ribosomal_uL1_B"/>
    <property type="match status" value="1"/>
</dbReference>
<dbReference type="InterPro" id="IPR005878">
    <property type="entry name" value="Ribosom_uL1_bac-type"/>
</dbReference>
<dbReference type="InterPro" id="IPR002143">
    <property type="entry name" value="Ribosomal_uL1"/>
</dbReference>
<dbReference type="InterPro" id="IPR023674">
    <property type="entry name" value="Ribosomal_uL1-like"/>
</dbReference>
<dbReference type="InterPro" id="IPR028364">
    <property type="entry name" value="Ribosomal_uL1/biogenesis"/>
</dbReference>
<dbReference type="InterPro" id="IPR016095">
    <property type="entry name" value="Ribosomal_uL1_3-a/b-sand"/>
</dbReference>
<dbReference type="InterPro" id="IPR023673">
    <property type="entry name" value="Ribosomal_uL1_CS"/>
</dbReference>
<dbReference type="NCBIfam" id="TIGR01169">
    <property type="entry name" value="rplA_bact"/>
    <property type="match status" value="1"/>
</dbReference>
<dbReference type="PANTHER" id="PTHR36427">
    <property type="entry name" value="54S RIBOSOMAL PROTEIN L1, MITOCHONDRIAL"/>
    <property type="match status" value="1"/>
</dbReference>
<dbReference type="PANTHER" id="PTHR36427:SF3">
    <property type="entry name" value="LARGE RIBOSOMAL SUBUNIT PROTEIN UL1M"/>
    <property type="match status" value="1"/>
</dbReference>
<dbReference type="Pfam" id="PF00687">
    <property type="entry name" value="Ribosomal_L1"/>
    <property type="match status" value="1"/>
</dbReference>
<dbReference type="PIRSF" id="PIRSF002155">
    <property type="entry name" value="Ribosomal_L1"/>
    <property type="match status" value="1"/>
</dbReference>
<dbReference type="SUPFAM" id="SSF56808">
    <property type="entry name" value="Ribosomal protein L1"/>
    <property type="match status" value="1"/>
</dbReference>
<dbReference type="PROSITE" id="PS01199">
    <property type="entry name" value="RIBOSOMAL_L1"/>
    <property type="match status" value="1"/>
</dbReference>
<evidence type="ECO:0000255" key="1">
    <source>
        <dbReference type="HAMAP-Rule" id="MF_01318"/>
    </source>
</evidence>
<evidence type="ECO:0000305" key="2"/>
<sequence length="232" mass="24152">MANIGKRLSAARETFDRDTLYTIDDAVAHVKSNAKAKFDETIELAINLGVDPRHADQMVRGVCNLPNGTGRSVRVAVFAKGPKAEEATKAGADVVGAEDLMEQIQGGNINFDKVIATPDMMPLVGRLGKVLGPRGMMPNPKVGTVTMGVTKAVNDSKGGAVEFRVEKAGIIHAGVGKASFTEAALAENVRALVDAIVKAKPSGAKGLYVRRIALSSTMGPGVKIDTSAAVSA</sequence>
<accession>Q0ANP0</accession>